<feature type="chain" id="PRO_1000192559" description="Hydroxylamine reductase">
    <location>
        <begin position="1"/>
        <end position="550"/>
    </location>
</feature>
<feature type="binding site" evidence="1">
    <location>
        <position position="3"/>
    </location>
    <ligand>
        <name>[2Fe-2S] cluster</name>
        <dbReference type="ChEBI" id="CHEBI:190135"/>
    </ligand>
</feature>
<feature type="binding site" evidence="1">
    <location>
        <position position="6"/>
    </location>
    <ligand>
        <name>[2Fe-2S] cluster</name>
        <dbReference type="ChEBI" id="CHEBI:190135"/>
    </ligand>
</feature>
<feature type="binding site" evidence="1">
    <location>
        <position position="18"/>
    </location>
    <ligand>
        <name>[2Fe-2S] cluster</name>
        <dbReference type="ChEBI" id="CHEBI:190135"/>
    </ligand>
</feature>
<feature type="binding site" evidence="1">
    <location>
        <position position="25"/>
    </location>
    <ligand>
        <name>[2Fe-2S] cluster</name>
        <dbReference type="ChEBI" id="CHEBI:190135"/>
    </ligand>
</feature>
<feature type="binding site" evidence="1">
    <location>
        <position position="249"/>
    </location>
    <ligand>
        <name>hybrid [4Fe-2O-2S] cluster</name>
        <dbReference type="ChEBI" id="CHEBI:60519"/>
    </ligand>
</feature>
<feature type="binding site" evidence="1">
    <location>
        <position position="273"/>
    </location>
    <ligand>
        <name>hybrid [4Fe-2O-2S] cluster</name>
        <dbReference type="ChEBI" id="CHEBI:60519"/>
    </ligand>
</feature>
<feature type="binding site" evidence="1">
    <location>
        <position position="317"/>
    </location>
    <ligand>
        <name>hybrid [4Fe-2O-2S] cluster</name>
        <dbReference type="ChEBI" id="CHEBI:60519"/>
    </ligand>
</feature>
<feature type="binding site" description="via persulfide group" evidence="1">
    <location>
        <position position="405"/>
    </location>
    <ligand>
        <name>hybrid [4Fe-2O-2S] cluster</name>
        <dbReference type="ChEBI" id="CHEBI:60519"/>
    </ligand>
</feature>
<feature type="binding site" evidence="1">
    <location>
        <position position="433"/>
    </location>
    <ligand>
        <name>hybrid [4Fe-2O-2S] cluster</name>
        <dbReference type="ChEBI" id="CHEBI:60519"/>
    </ligand>
</feature>
<feature type="binding site" evidence="1">
    <location>
        <position position="458"/>
    </location>
    <ligand>
        <name>hybrid [4Fe-2O-2S] cluster</name>
        <dbReference type="ChEBI" id="CHEBI:60519"/>
    </ligand>
</feature>
<feature type="binding site" evidence="1">
    <location>
        <position position="492"/>
    </location>
    <ligand>
        <name>hybrid [4Fe-2O-2S] cluster</name>
        <dbReference type="ChEBI" id="CHEBI:60519"/>
    </ligand>
</feature>
<feature type="binding site" evidence="1">
    <location>
        <position position="494"/>
    </location>
    <ligand>
        <name>hybrid [4Fe-2O-2S] cluster</name>
        <dbReference type="ChEBI" id="CHEBI:60519"/>
    </ligand>
</feature>
<feature type="modified residue" description="Cysteine persulfide" evidence="1">
    <location>
        <position position="405"/>
    </location>
</feature>
<organism>
    <name type="scientific">Escherichia coli O7:K1 (strain IAI39 / ExPEC)</name>
    <dbReference type="NCBI Taxonomy" id="585057"/>
    <lineage>
        <taxon>Bacteria</taxon>
        <taxon>Pseudomonadati</taxon>
        <taxon>Pseudomonadota</taxon>
        <taxon>Gammaproteobacteria</taxon>
        <taxon>Enterobacterales</taxon>
        <taxon>Enterobacteriaceae</taxon>
        <taxon>Escherichia</taxon>
    </lineage>
</organism>
<accession>B7NPH0</accession>
<sequence>MFCVQCEQTIRTPAGNGCSYAQGMCGKTAETSDLQDLLIAALQGLSAWAVKAREYGIINHDVDSFAPRAFFSTLTNVNFDSPRIVGYAREAIALREALKAQCLAVDANARVDNPMADLQLVSDDLGELQRQAAEFTPNKDKAAIGENILGLRLLCLYGLKGAAAYMEHAHVLGQYDNDIYAQYHKIMAWLGTWPADMNALLECSMEIGQMNFKVMSILDAGETSKYGHPTPTQVNVKATAGKCILISGHDLKDLYNLLEQTEGTGVNVYTHGEMLPAHGYPELRKFKHLVGNYGSGWQNQQVEFARFPGPIVMTSNCIIDPTVGAYDDRIWTRSIVGWPGVRHLDGEDFSAVIAQAQQMAGFPYSEIPHLITVGFGRQTLLGAADTLIDLVSREKLRHIFLLGGCDGARGERHYFTDFATSVPDDCLILTLACGKYRFNKLEFGDIEGLPRLVDAGQCNDAYSAIILAVTLAEKLGCGVNDLPLSLVLSWFEQKAIVILLTLLSLGVKNIVTGPTAPGFLTPDLLAVLNEKFGLRSITTVEEDMKQLLSA</sequence>
<proteinExistence type="inferred from homology"/>
<dbReference type="EC" id="1.7.99.1" evidence="1"/>
<dbReference type="EMBL" id="CU928164">
    <property type="protein sequence ID" value="CAR16991.1"/>
    <property type="molecule type" value="Genomic_DNA"/>
</dbReference>
<dbReference type="RefSeq" id="WP_000458825.1">
    <property type="nucleotide sequence ID" value="NC_011750.1"/>
</dbReference>
<dbReference type="RefSeq" id="YP_002406878.1">
    <property type="nucleotide sequence ID" value="NC_011750.1"/>
</dbReference>
<dbReference type="SMR" id="B7NPH0"/>
<dbReference type="STRING" id="585057.ECIAI39_0854"/>
<dbReference type="KEGG" id="ect:ECIAI39_0854"/>
<dbReference type="PATRIC" id="fig|585057.6.peg.901"/>
<dbReference type="HOGENOM" id="CLU_038344_2_0_6"/>
<dbReference type="Proteomes" id="UP000000749">
    <property type="component" value="Chromosome"/>
</dbReference>
<dbReference type="GO" id="GO:0005737">
    <property type="term" value="C:cytoplasm"/>
    <property type="evidence" value="ECO:0007669"/>
    <property type="project" value="UniProtKB-SubCell"/>
</dbReference>
<dbReference type="GO" id="GO:0051537">
    <property type="term" value="F:2 iron, 2 sulfur cluster binding"/>
    <property type="evidence" value="ECO:0007669"/>
    <property type="project" value="UniProtKB-KW"/>
</dbReference>
<dbReference type="GO" id="GO:0050418">
    <property type="term" value="F:hydroxylamine reductase activity"/>
    <property type="evidence" value="ECO:0007669"/>
    <property type="project" value="UniProtKB-UniRule"/>
</dbReference>
<dbReference type="GO" id="GO:0046872">
    <property type="term" value="F:metal ion binding"/>
    <property type="evidence" value="ECO:0007669"/>
    <property type="project" value="UniProtKB-KW"/>
</dbReference>
<dbReference type="GO" id="GO:0004601">
    <property type="term" value="F:peroxidase activity"/>
    <property type="evidence" value="ECO:0007669"/>
    <property type="project" value="TreeGrafter"/>
</dbReference>
<dbReference type="GO" id="GO:0042542">
    <property type="term" value="P:response to hydrogen peroxide"/>
    <property type="evidence" value="ECO:0007669"/>
    <property type="project" value="TreeGrafter"/>
</dbReference>
<dbReference type="CDD" id="cd01914">
    <property type="entry name" value="HCP"/>
    <property type="match status" value="1"/>
</dbReference>
<dbReference type="FunFam" id="1.20.1270.20:FF:000001">
    <property type="entry name" value="Hydroxylamine reductase"/>
    <property type="match status" value="1"/>
</dbReference>
<dbReference type="FunFam" id="1.20.1270.20:FF:000002">
    <property type="entry name" value="Hydroxylamine reductase"/>
    <property type="match status" value="1"/>
</dbReference>
<dbReference type="FunFam" id="3.40.50.2030:FF:000001">
    <property type="entry name" value="Hydroxylamine reductase"/>
    <property type="match status" value="1"/>
</dbReference>
<dbReference type="FunFam" id="3.40.50.2030:FF:000002">
    <property type="entry name" value="Hydroxylamine reductase"/>
    <property type="match status" value="1"/>
</dbReference>
<dbReference type="Gene3D" id="1.20.1270.20">
    <property type="match status" value="2"/>
</dbReference>
<dbReference type="Gene3D" id="3.40.50.2030">
    <property type="match status" value="2"/>
</dbReference>
<dbReference type="HAMAP" id="MF_00069">
    <property type="entry name" value="Hydroxylam_reduct"/>
    <property type="match status" value="1"/>
</dbReference>
<dbReference type="InterPro" id="IPR004137">
    <property type="entry name" value="HCP/CODH"/>
</dbReference>
<dbReference type="InterPro" id="IPR010048">
    <property type="entry name" value="Hydroxylam_reduct"/>
</dbReference>
<dbReference type="InterPro" id="IPR016099">
    <property type="entry name" value="Prismane-like_a/b-sand"/>
</dbReference>
<dbReference type="InterPro" id="IPR011254">
    <property type="entry name" value="Prismane-like_sf"/>
</dbReference>
<dbReference type="InterPro" id="IPR016100">
    <property type="entry name" value="Prismane_a-bundle"/>
</dbReference>
<dbReference type="NCBIfam" id="TIGR01703">
    <property type="entry name" value="hybrid_clust"/>
    <property type="match status" value="1"/>
</dbReference>
<dbReference type="NCBIfam" id="NF003658">
    <property type="entry name" value="PRK05290.1"/>
    <property type="match status" value="1"/>
</dbReference>
<dbReference type="PANTHER" id="PTHR30109">
    <property type="entry name" value="HYDROXYLAMINE REDUCTASE"/>
    <property type="match status" value="1"/>
</dbReference>
<dbReference type="PANTHER" id="PTHR30109:SF0">
    <property type="entry name" value="HYDROXYLAMINE REDUCTASE"/>
    <property type="match status" value="1"/>
</dbReference>
<dbReference type="Pfam" id="PF03063">
    <property type="entry name" value="Prismane"/>
    <property type="match status" value="1"/>
</dbReference>
<dbReference type="PIRSF" id="PIRSF000076">
    <property type="entry name" value="HCP"/>
    <property type="match status" value="1"/>
</dbReference>
<dbReference type="SUPFAM" id="SSF56821">
    <property type="entry name" value="Prismane protein-like"/>
    <property type="match status" value="1"/>
</dbReference>
<protein>
    <recommendedName>
        <fullName evidence="1">Hydroxylamine reductase</fullName>
        <ecNumber evidence="1">1.7.99.1</ecNumber>
    </recommendedName>
    <alternativeName>
        <fullName evidence="1">Hybrid-cluster protein</fullName>
        <shortName evidence="1">HCP</shortName>
    </alternativeName>
    <alternativeName>
        <fullName evidence="1">Prismane protein</fullName>
    </alternativeName>
</protein>
<reference key="1">
    <citation type="journal article" date="2009" name="PLoS Genet.">
        <title>Organised genome dynamics in the Escherichia coli species results in highly diverse adaptive paths.</title>
        <authorList>
            <person name="Touchon M."/>
            <person name="Hoede C."/>
            <person name="Tenaillon O."/>
            <person name="Barbe V."/>
            <person name="Baeriswyl S."/>
            <person name="Bidet P."/>
            <person name="Bingen E."/>
            <person name="Bonacorsi S."/>
            <person name="Bouchier C."/>
            <person name="Bouvet O."/>
            <person name="Calteau A."/>
            <person name="Chiapello H."/>
            <person name="Clermont O."/>
            <person name="Cruveiller S."/>
            <person name="Danchin A."/>
            <person name="Diard M."/>
            <person name="Dossat C."/>
            <person name="Karoui M.E."/>
            <person name="Frapy E."/>
            <person name="Garry L."/>
            <person name="Ghigo J.M."/>
            <person name="Gilles A.M."/>
            <person name="Johnson J."/>
            <person name="Le Bouguenec C."/>
            <person name="Lescat M."/>
            <person name="Mangenot S."/>
            <person name="Martinez-Jehanne V."/>
            <person name="Matic I."/>
            <person name="Nassif X."/>
            <person name="Oztas S."/>
            <person name="Petit M.A."/>
            <person name="Pichon C."/>
            <person name="Rouy Z."/>
            <person name="Ruf C.S."/>
            <person name="Schneider D."/>
            <person name="Tourret J."/>
            <person name="Vacherie B."/>
            <person name="Vallenet D."/>
            <person name="Medigue C."/>
            <person name="Rocha E.P.C."/>
            <person name="Denamur E."/>
        </authorList>
    </citation>
    <scope>NUCLEOTIDE SEQUENCE [LARGE SCALE GENOMIC DNA]</scope>
    <source>
        <strain>IAI39 / ExPEC</strain>
    </source>
</reference>
<gene>
    <name evidence="1" type="primary">hcp</name>
    <name type="ordered locus">ECIAI39_0854</name>
</gene>
<keyword id="KW-0001">2Fe-2S</keyword>
<keyword id="KW-0963">Cytoplasm</keyword>
<keyword id="KW-0408">Iron</keyword>
<keyword id="KW-0411">Iron-sulfur</keyword>
<keyword id="KW-0479">Metal-binding</keyword>
<keyword id="KW-0560">Oxidoreductase</keyword>
<comment type="function">
    <text evidence="1">Catalyzes the reduction of hydroxylamine to form NH(3) and H(2)O.</text>
</comment>
<comment type="catalytic activity">
    <reaction evidence="1">
        <text>A + NH4(+) + H2O = hydroxylamine + AH2 + H(+)</text>
        <dbReference type="Rhea" id="RHEA:22052"/>
        <dbReference type="ChEBI" id="CHEBI:13193"/>
        <dbReference type="ChEBI" id="CHEBI:15377"/>
        <dbReference type="ChEBI" id="CHEBI:15378"/>
        <dbReference type="ChEBI" id="CHEBI:15429"/>
        <dbReference type="ChEBI" id="CHEBI:17499"/>
        <dbReference type="ChEBI" id="CHEBI:28938"/>
        <dbReference type="EC" id="1.7.99.1"/>
    </reaction>
</comment>
<comment type="cofactor">
    <cofactor evidence="1">
        <name>[2Fe-2S] cluster</name>
        <dbReference type="ChEBI" id="CHEBI:190135"/>
    </cofactor>
    <text evidence="1">Binds 1 [2Fe-2S] cluster.</text>
</comment>
<comment type="cofactor">
    <cofactor evidence="1">
        <name>hybrid [4Fe-2O-2S] cluster</name>
        <dbReference type="ChEBI" id="CHEBI:60519"/>
    </cofactor>
    <text evidence="1">Binds 1 hybrid [4Fe-2O-2S] cluster.</text>
</comment>
<comment type="subcellular location">
    <subcellularLocation>
        <location evidence="1">Cytoplasm</location>
    </subcellularLocation>
</comment>
<comment type="similarity">
    <text evidence="1">Belongs to the HCP family.</text>
</comment>
<evidence type="ECO:0000255" key="1">
    <source>
        <dbReference type="HAMAP-Rule" id="MF_00069"/>
    </source>
</evidence>
<name>HCP_ECO7I</name>